<organism>
    <name type="scientific">Staphylococcus aureus (strain COL)</name>
    <dbReference type="NCBI Taxonomy" id="93062"/>
    <lineage>
        <taxon>Bacteria</taxon>
        <taxon>Bacillati</taxon>
        <taxon>Bacillota</taxon>
        <taxon>Bacilli</taxon>
        <taxon>Bacillales</taxon>
        <taxon>Staphylococcaceae</taxon>
        <taxon>Staphylococcus</taxon>
    </lineage>
</organism>
<feature type="signal peptide" evidence="2">
    <location>
        <begin position="1"/>
        <end position="27"/>
    </location>
</feature>
<feature type="chain" id="PRO_0000045314" description="Staphylococcal secretory antigen ssaA2">
    <location>
        <begin position="28"/>
        <end position="267"/>
    </location>
</feature>
<feature type="repeat" description="1">
    <location>
        <begin position="83"/>
        <end position="85"/>
    </location>
</feature>
<feature type="repeat" description="2">
    <location>
        <begin position="86"/>
        <end position="88"/>
    </location>
</feature>
<feature type="repeat" description="3">
    <location>
        <begin position="89"/>
        <end position="91"/>
    </location>
</feature>
<feature type="repeat" description="4">
    <location>
        <begin position="95"/>
        <end position="97"/>
    </location>
</feature>
<feature type="repeat" description="5">
    <location>
        <begin position="101"/>
        <end position="103"/>
    </location>
</feature>
<feature type="repeat" description="6">
    <location>
        <begin position="104"/>
        <end position="106"/>
    </location>
</feature>
<feature type="repeat" description="7">
    <location>
        <begin position="113"/>
        <end position="115"/>
    </location>
</feature>
<feature type="domain" description="Peptidase C51" evidence="3">
    <location>
        <begin position="146"/>
        <end position="267"/>
    </location>
</feature>
<feature type="region of interest" description="7 X 3 AA repeats of Y-[NS]-N">
    <location>
        <begin position="83"/>
        <end position="115"/>
    </location>
</feature>
<name>SSAA2_STAAC</name>
<reference key="1">
    <citation type="journal article" date="2005" name="J. Bacteriol.">
        <title>Insights on evolution of virulence and resistance from the complete genome analysis of an early methicillin-resistant Staphylococcus aureus strain and a biofilm-producing methicillin-resistant Staphylococcus epidermidis strain.</title>
        <authorList>
            <person name="Gill S.R."/>
            <person name="Fouts D.E."/>
            <person name="Archer G.L."/>
            <person name="Mongodin E.F."/>
            <person name="DeBoy R.T."/>
            <person name="Ravel J."/>
            <person name="Paulsen I.T."/>
            <person name="Kolonay J.F."/>
            <person name="Brinkac L.M."/>
            <person name="Beanan M.J."/>
            <person name="Dodson R.J."/>
            <person name="Daugherty S.C."/>
            <person name="Madupu R."/>
            <person name="Angiuoli S.V."/>
            <person name="Durkin A.S."/>
            <person name="Haft D.H."/>
            <person name="Vamathevan J.J."/>
            <person name="Khouri H."/>
            <person name="Utterback T.R."/>
            <person name="Lee C."/>
            <person name="Dimitrov G."/>
            <person name="Jiang L."/>
            <person name="Qin H."/>
            <person name="Weidman J."/>
            <person name="Tran K."/>
            <person name="Kang K.H."/>
            <person name="Hance I.R."/>
            <person name="Nelson K.E."/>
            <person name="Fraser C.M."/>
        </authorList>
    </citation>
    <scope>NUCLEOTIDE SEQUENCE [LARGE SCALE GENOMIC DNA]</scope>
    <source>
        <strain>COL</strain>
    </source>
</reference>
<dbReference type="EMBL" id="CP000046">
    <property type="protein sequence ID" value="AAW38511.1"/>
    <property type="molecule type" value="Genomic_DNA"/>
</dbReference>
<dbReference type="RefSeq" id="WP_000717381.1">
    <property type="nucleotide sequence ID" value="NZ_JBGOFO010000004.1"/>
</dbReference>
<dbReference type="SMR" id="Q5HDQ9"/>
<dbReference type="KEGG" id="sac:SACOL2291"/>
<dbReference type="HOGENOM" id="CLU_016043_11_0_9"/>
<dbReference type="Proteomes" id="UP000000530">
    <property type="component" value="Chromosome"/>
</dbReference>
<dbReference type="GO" id="GO:0005576">
    <property type="term" value="C:extracellular region"/>
    <property type="evidence" value="ECO:0007669"/>
    <property type="project" value="UniProtKB-SubCell"/>
</dbReference>
<dbReference type="Gene3D" id="3.90.1720.10">
    <property type="entry name" value="endopeptidase domain like (from Nostoc punctiforme)"/>
    <property type="match status" value="1"/>
</dbReference>
<dbReference type="InterPro" id="IPR007921">
    <property type="entry name" value="CHAP_dom"/>
</dbReference>
<dbReference type="InterPro" id="IPR038765">
    <property type="entry name" value="Papain-like_cys_pep_sf"/>
</dbReference>
<dbReference type="Pfam" id="PF05257">
    <property type="entry name" value="CHAP"/>
    <property type="match status" value="1"/>
</dbReference>
<dbReference type="SUPFAM" id="SSF54001">
    <property type="entry name" value="Cysteine proteinases"/>
    <property type="match status" value="1"/>
</dbReference>
<dbReference type="PROSITE" id="PS50911">
    <property type="entry name" value="CHAP"/>
    <property type="match status" value="1"/>
</dbReference>
<evidence type="ECO:0000250" key="1"/>
<evidence type="ECO:0000255" key="2"/>
<evidence type="ECO:0000255" key="3">
    <source>
        <dbReference type="PROSITE-ProRule" id="PRU00048"/>
    </source>
</evidence>
<sequence length="267" mass="29327">MKKIATATIATAGFATIAIASGNQAHASEQDNYGYNPNDPTSYSYTYTIDAQGNYHYTWKGNWHPSQLNQDNGYYSYYYYNGYNNYNNYNNGYSYNNYSRYNNYSNNNQSYNYNNYNSYNTNSYRTGGLGASYSTSSNNVQVTTTMAPSSNGRSISSGYTSGRNLYTSGQCTYYVFDRVGGKIGSTWGNASNWANAAARAGYTVNNTPKAGAIMQTTQGAYGHVAYVESVNSNGSVRVSEMNYGYGPGVVTSRTISASQAAGYNFIH</sequence>
<keyword id="KW-0677">Repeat</keyword>
<keyword id="KW-0964">Secreted</keyword>
<keyword id="KW-0732">Signal</keyword>
<keyword id="KW-0843">Virulence</keyword>
<protein>
    <recommendedName>
        <fullName>Staphylococcal secretory antigen ssaA2</fullName>
    </recommendedName>
</protein>
<proteinExistence type="inferred from homology"/>
<comment type="function">
    <text evidence="1">Not known; immunogenic protein.</text>
</comment>
<comment type="subcellular location">
    <subcellularLocation>
        <location evidence="1">Secreted</location>
    </subcellularLocation>
</comment>
<accession>Q5HDQ9</accession>
<gene>
    <name type="primary">ssaA2</name>
    <name type="ordered locus">SACOL2291</name>
</gene>